<dbReference type="EMBL" id="AC000107">
    <property type="protein sequence ID" value="AAF98187.1"/>
    <property type="molecule type" value="Genomic_DNA"/>
</dbReference>
<dbReference type="EMBL" id="CP002684">
    <property type="protein sequence ID" value="AEE31297.1"/>
    <property type="molecule type" value="Genomic_DNA"/>
</dbReference>
<dbReference type="EMBL" id="BT015076">
    <property type="protein sequence ID" value="AAT71948.1"/>
    <property type="molecule type" value="mRNA"/>
</dbReference>
<dbReference type="EMBL" id="BT015910">
    <property type="protein sequence ID" value="AAU95446.1"/>
    <property type="molecule type" value="mRNA"/>
</dbReference>
<dbReference type="EMBL" id="Y17969">
    <property type="protein sequence ID" value="CAA76979.1"/>
    <property type="molecule type" value="Genomic_DNA"/>
</dbReference>
<dbReference type="PIR" id="C86435">
    <property type="entry name" value="C86435"/>
</dbReference>
<dbReference type="RefSeq" id="NP_174383.1">
    <property type="nucleotide sequence ID" value="NM_102835.5"/>
</dbReference>
<dbReference type="SMR" id="O82653"/>
<dbReference type="BioGRID" id="25218">
    <property type="interactions" value="1"/>
</dbReference>
<dbReference type="FunCoup" id="O82653">
    <property type="interactions" value="3947"/>
</dbReference>
<dbReference type="STRING" id="3702.O82653"/>
<dbReference type="iPTMnet" id="O82653"/>
<dbReference type="PaxDb" id="3702-AT1G30960.1"/>
<dbReference type="ProteomicsDB" id="220576"/>
<dbReference type="EnsemblPlants" id="AT1G30960.1">
    <property type="protein sequence ID" value="AT1G30960.1"/>
    <property type="gene ID" value="AT1G30960"/>
</dbReference>
<dbReference type="GeneID" id="839983"/>
<dbReference type="Gramene" id="AT1G30960.1">
    <property type="protein sequence ID" value="AT1G30960.1"/>
    <property type="gene ID" value="AT1G30960"/>
</dbReference>
<dbReference type="KEGG" id="ath:AT1G30960"/>
<dbReference type="Araport" id="AT1G30960"/>
<dbReference type="TAIR" id="AT1G30960">
    <property type="gene designation" value="ERA-2"/>
</dbReference>
<dbReference type="eggNOG" id="KOG1423">
    <property type="taxonomic scope" value="Eukaryota"/>
</dbReference>
<dbReference type="HOGENOM" id="CLU_038009_2_0_1"/>
<dbReference type="InParanoid" id="O82653"/>
<dbReference type="OMA" id="YVIDHRL"/>
<dbReference type="PhylomeDB" id="O82653"/>
<dbReference type="PRO" id="PR:O82653"/>
<dbReference type="Proteomes" id="UP000006548">
    <property type="component" value="Chromosome 1"/>
</dbReference>
<dbReference type="ExpressionAtlas" id="O82653">
    <property type="expression patterns" value="baseline and differential"/>
</dbReference>
<dbReference type="GO" id="GO:0005739">
    <property type="term" value="C:mitochondrion"/>
    <property type="evidence" value="ECO:0000314"/>
    <property type="project" value="TAIR"/>
</dbReference>
<dbReference type="GO" id="GO:0005525">
    <property type="term" value="F:GTP binding"/>
    <property type="evidence" value="ECO:0007669"/>
    <property type="project" value="UniProtKB-KW"/>
</dbReference>
<dbReference type="GO" id="GO:0097177">
    <property type="term" value="F:mitochondrial ribosome binding"/>
    <property type="evidence" value="ECO:0000314"/>
    <property type="project" value="TAIR"/>
</dbReference>
<dbReference type="GO" id="GO:0003723">
    <property type="term" value="F:RNA binding"/>
    <property type="evidence" value="ECO:0007669"/>
    <property type="project" value="UniProtKB-KW"/>
</dbReference>
<dbReference type="CDD" id="cd04163">
    <property type="entry name" value="Era"/>
    <property type="match status" value="1"/>
</dbReference>
<dbReference type="CDD" id="cd22534">
    <property type="entry name" value="KH-II_Era"/>
    <property type="match status" value="1"/>
</dbReference>
<dbReference type="FunFam" id="3.30.300.20:FF:000017">
    <property type="entry name" value="GTP-binding protein ERG"/>
    <property type="match status" value="1"/>
</dbReference>
<dbReference type="FunFam" id="3.40.50.300:FF:001190">
    <property type="entry name" value="GTP-binding protein ERG"/>
    <property type="match status" value="1"/>
</dbReference>
<dbReference type="Gene3D" id="3.30.300.20">
    <property type="match status" value="1"/>
</dbReference>
<dbReference type="Gene3D" id="3.40.50.300">
    <property type="entry name" value="P-loop containing nucleotide triphosphate hydrolases"/>
    <property type="match status" value="1"/>
</dbReference>
<dbReference type="HAMAP" id="MF_00367">
    <property type="entry name" value="GTPase_Era"/>
    <property type="match status" value="1"/>
</dbReference>
<dbReference type="InterPro" id="IPR030388">
    <property type="entry name" value="G_ERA_dom"/>
</dbReference>
<dbReference type="InterPro" id="IPR006073">
    <property type="entry name" value="GTP-bd"/>
</dbReference>
<dbReference type="InterPro" id="IPR005662">
    <property type="entry name" value="GTPase_Era-like"/>
</dbReference>
<dbReference type="InterPro" id="IPR015946">
    <property type="entry name" value="KH_dom-like_a/b"/>
</dbReference>
<dbReference type="InterPro" id="IPR004044">
    <property type="entry name" value="KH_dom_type_2"/>
</dbReference>
<dbReference type="InterPro" id="IPR009019">
    <property type="entry name" value="KH_sf_prok-type"/>
</dbReference>
<dbReference type="InterPro" id="IPR027417">
    <property type="entry name" value="P-loop_NTPase"/>
</dbReference>
<dbReference type="InterPro" id="IPR005225">
    <property type="entry name" value="Small_GTP-bd"/>
</dbReference>
<dbReference type="NCBIfam" id="TIGR00436">
    <property type="entry name" value="era"/>
    <property type="match status" value="1"/>
</dbReference>
<dbReference type="NCBIfam" id="TIGR00231">
    <property type="entry name" value="small_GTP"/>
    <property type="match status" value="1"/>
</dbReference>
<dbReference type="PANTHER" id="PTHR42698">
    <property type="entry name" value="GTPASE ERA"/>
    <property type="match status" value="1"/>
</dbReference>
<dbReference type="PANTHER" id="PTHR42698:SF1">
    <property type="entry name" value="GTPASE ERA, MITOCHONDRIAL"/>
    <property type="match status" value="1"/>
</dbReference>
<dbReference type="Pfam" id="PF07650">
    <property type="entry name" value="KH_2"/>
    <property type="match status" value="1"/>
</dbReference>
<dbReference type="Pfam" id="PF01926">
    <property type="entry name" value="MMR_HSR1"/>
    <property type="match status" value="1"/>
</dbReference>
<dbReference type="SUPFAM" id="SSF52540">
    <property type="entry name" value="P-loop containing nucleoside triphosphate hydrolases"/>
    <property type="match status" value="1"/>
</dbReference>
<dbReference type="SUPFAM" id="SSF54814">
    <property type="entry name" value="Prokaryotic type KH domain (KH-domain type II)"/>
    <property type="match status" value="1"/>
</dbReference>
<dbReference type="PROSITE" id="PS51713">
    <property type="entry name" value="G_ERA"/>
    <property type="match status" value="1"/>
</dbReference>
<dbReference type="PROSITE" id="PS50823">
    <property type="entry name" value="KH_TYPE_2"/>
    <property type="match status" value="1"/>
</dbReference>
<protein>
    <recommendedName>
        <fullName>GTP-binding protein ERG</fullName>
    </recommendedName>
</protein>
<name>ERG_ARATH</name>
<keyword id="KW-0342">GTP-binding</keyword>
<keyword id="KW-0547">Nucleotide-binding</keyword>
<keyword id="KW-0597">Phosphoprotein</keyword>
<keyword id="KW-1185">Reference proteome</keyword>
<keyword id="KW-0694">RNA-binding</keyword>
<evidence type="ECO:0000255" key="1"/>
<evidence type="ECO:0000255" key="2">
    <source>
        <dbReference type="PROSITE-ProRule" id="PRU01050"/>
    </source>
</evidence>
<evidence type="ECO:0000256" key="3">
    <source>
        <dbReference type="SAM" id="MobiDB-lite"/>
    </source>
</evidence>
<evidence type="ECO:0000305" key="4"/>
<evidence type="ECO:0007744" key="5">
    <source>
    </source>
</evidence>
<organism>
    <name type="scientific">Arabidopsis thaliana</name>
    <name type="common">Mouse-ear cress</name>
    <dbReference type="NCBI Taxonomy" id="3702"/>
    <lineage>
        <taxon>Eukaryota</taxon>
        <taxon>Viridiplantae</taxon>
        <taxon>Streptophyta</taxon>
        <taxon>Embryophyta</taxon>
        <taxon>Tracheophyta</taxon>
        <taxon>Spermatophyta</taxon>
        <taxon>Magnoliopsida</taxon>
        <taxon>eudicotyledons</taxon>
        <taxon>Gunneridae</taxon>
        <taxon>Pentapetalae</taxon>
        <taxon>rosids</taxon>
        <taxon>malvids</taxon>
        <taxon>Brassicales</taxon>
        <taxon>Brassicaceae</taxon>
        <taxon>Camelineae</taxon>
        <taxon>Arabidopsis</taxon>
    </lineage>
</organism>
<comment type="function">
    <text>Has a crucial role in plant growth and development, possibly by influencing mitochondrial division.</text>
</comment>
<comment type="similarity">
    <text evidence="2 4">Belongs to the TRAFAC class TrmE-Era-EngA-EngB-Septin-like GTPase superfamily. Era GTPase family.</text>
</comment>
<sequence>MKAFRSLRILISISRTTTKTTPRNPHQAQNFLRRFYSAQPNLDEPTSINEDGSSSDSVFDSSQYPIDDSNVDSVKKPKEATWDKGYRERVNKAFFGNLTEKGKVKVAEEESSEDDEDSVDRSRILAKALLEAALESPDEELGEGEVREEDQKSLNVGIIGPPNAGKSSLTNFMVGTKVAAASRKTNTTTHEVLGVLTKGDTQVCFFDTPGLMLKKSGYGYKDIKARVQNAWTSVDLFDVLIVMFDVHRHLMSPDSRVVRLIKYMGEEENPKQKRVLCMNKVDLVEKKKDLLKVAEEFQDLPAYERYFMISGLKGSGVKDLSQYLMDQAVKKPWEEDAFTMSEEVLKNISLEVVRERLLDHVHQEIPYGLEHRLVDWKELRDGSLRIEQHLITPKLSQRKILVGKGGCKIGRIGIEANEELRRIMNRKVHLILQVKLK</sequence>
<accession>O82653</accession>
<accession>Q6DBE6</accession>
<reference key="1">
    <citation type="journal article" date="2000" name="Nature">
        <title>Sequence and analysis of chromosome 1 of the plant Arabidopsis thaliana.</title>
        <authorList>
            <person name="Theologis A."/>
            <person name="Ecker J.R."/>
            <person name="Palm C.J."/>
            <person name="Federspiel N.A."/>
            <person name="Kaul S."/>
            <person name="White O."/>
            <person name="Alonso J."/>
            <person name="Altafi H."/>
            <person name="Araujo R."/>
            <person name="Bowman C.L."/>
            <person name="Brooks S.Y."/>
            <person name="Buehler E."/>
            <person name="Chan A."/>
            <person name="Chao Q."/>
            <person name="Chen H."/>
            <person name="Cheuk R.F."/>
            <person name="Chin C.W."/>
            <person name="Chung M.K."/>
            <person name="Conn L."/>
            <person name="Conway A.B."/>
            <person name="Conway A.R."/>
            <person name="Creasy T.H."/>
            <person name="Dewar K."/>
            <person name="Dunn P."/>
            <person name="Etgu P."/>
            <person name="Feldblyum T.V."/>
            <person name="Feng J.-D."/>
            <person name="Fong B."/>
            <person name="Fujii C.Y."/>
            <person name="Gill J.E."/>
            <person name="Goldsmith A.D."/>
            <person name="Haas B."/>
            <person name="Hansen N.F."/>
            <person name="Hughes B."/>
            <person name="Huizar L."/>
            <person name="Hunter J.L."/>
            <person name="Jenkins J."/>
            <person name="Johnson-Hopson C."/>
            <person name="Khan S."/>
            <person name="Khaykin E."/>
            <person name="Kim C.J."/>
            <person name="Koo H.L."/>
            <person name="Kremenetskaia I."/>
            <person name="Kurtz D.B."/>
            <person name="Kwan A."/>
            <person name="Lam B."/>
            <person name="Langin-Hooper S."/>
            <person name="Lee A."/>
            <person name="Lee J.M."/>
            <person name="Lenz C.A."/>
            <person name="Li J.H."/>
            <person name="Li Y.-P."/>
            <person name="Lin X."/>
            <person name="Liu S.X."/>
            <person name="Liu Z.A."/>
            <person name="Luros J.S."/>
            <person name="Maiti R."/>
            <person name="Marziali A."/>
            <person name="Militscher J."/>
            <person name="Miranda M."/>
            <person name="Nguyen M."/>
            <person name="Nierman W.C."/>
            <person name="Osborne B.I."/>
            <person name="Pai G."/>
            <person name="Peterson J."/>
            <person name="Pham P.K."/>
            <person name="Rizzo M."/>
            <person name="Rooney T."/>
            <person name="Rowley D."/>
            <person name="Sakano H."/>
            <person name="Salzberg S.L."/>
            <person name="Schwartz J.R."/>
            <person name="Shinn P."/>
            <person name="Southwick A.M."/>
            <person name="Sun H."/>
            <person name="Tallon L.J."/>
            <person name="Tambunga G."/>
            <person name="Toriumi M.J."/>
            <person name="Town C.D."/>
            <person name="Utterback T."/>
            <person name="Van Aken S."/>
            <person name="Vaysberg M."/>
            <person name="Vysotskaia V.S."/>
            <person name="Walker M."/>
            <person name="Wu D."/>
            <person name="Yu G."/>
            <person name="Fraser C.M."/>
            <person name="Venter J.C."/>
            <person name="Davis R.W."/>
        </authorList>
    </citation>
    <scope>NUCLEOTIDE SEQUENCE [LARGE SCALE GENOMIC DNA]</scope>
    <source>
        <strain>cv. Columbia</strain>
    </source>
</reference>
<reference key="2">
    <citation type="journal article" date="2017" name="Plant J.">
        <title>Araport11: a complete reannotation of the Arabidopsis thaliana reference genome.</title>
        <authorList>
            <person name="Cheng C.Y."/>
            <person name="Krishnakumar V."/>
            <person name="Chan A.P."/>
            <person name="Thibaud-Nissen F."/>
            <person name="Schobel S."/>
            <person name="Town C.D."/>
        </authorList>
    </citation>
    <scope>GENOME REANNOTATION</scope>
    <source>
        <strain>cv. Columbia</strain>
    </source>
</reference>
<reference key="3">
    <citation type="submission" date="2004-10" db="EMBL/GenBank/DDBJ databases">
        <title>Arabidopsis ORF clones.</title>
        <authorList>
            <person name="Cheuk R.F."/>
            <person name="Chen H."/>
            <person name="Kim C.J."/>
            <person name="Shinn P."/>
            <person name="Ecker J.R."/>
        </authorList>
    </citation>
    <scope>NUCLEOTIDE SEQUENCE [LARGE SCALE MRNA]</scope>
    <source>
        <strain>cv. Columbia</strain>
    </source>
</reference>
<reference key="4">
    <citation type="journal article" date="1998" name="Curr. Biol.">
        <title>The Antirrhinum ERG gene encodes a protein related to bacterial small GTPases and is required for embryonic viability.</title>
        <authorList>
            <person name="Ingram G.C."/>
            <person name="Simon R."/>
            <person name="Carpenter R."/>
            <person name="Coen E.S."/>
        </authorList>
    </citation>
    <scope>NUCLEOTIDE SEQUENCE [GENOMIC DNA] OF 32-410</scope>
</reference>
<reference key="5">
    <citation type="journal article" date="2008" name="J. Proteome Res.">
        <title>Site-specific phosphorylation profiling of Arabidopsis proteins by mass spectrometry and peptide chip analysis.</title>
        <authorList>
            <person name="de la Fuente van Bentem S."/>
            <person name="Anrather D."/>
            <person name="Dohnal I."/>
            <person name="Roitinger E."/>
            <person name="Csaszar E."/>
            <person name="Joore J."/>
            <person name="Buijnink J."/>
            <person name="Carreri A."/>
            <person name="Forzani C."/>
            <person name="Lorkovic Z.J."/>
            <person name="Barta A."/>
            <person name="Lecourieux D."/>
            <person name="Verhounig A."/>
            <person name="Jonak C."/>
            <person name="Hirt H."/>
        </authorList>
    </citation>
    <scope>PHOSPHORYLATION [LARGE SCALE ANALYSIS] AT SER-111 AND SER-112</scope>
    <scope>IDENTIFICATION BY MASS SPECTROMETRY [LARGE SCALE ANALYSIS]</scope>
    <source>
        <tissue>Root</tissue>
    </source>
</reference>
<feature type="chain" id="PRO_0000180080" description="GTP-binding protein ERG">
    <location>
        <begin position="1"/>
        <end position="437"/>
    </location>
</feature>
<feature type="domain" description="Era-type G" evidence="2">
    <location>
        <begin position="152"/>
        <end position="333"/>
    </location>
</feature>
<feature type="domain" description="KH type-2">
    <location>
        <begin position="361"/>
        <end position="437"/>
    </location>
</feature>
<feature type="region of interest" description="Disordered" evidence="3">
    <location>
        <begin position="39"/>
        <end position="65"/>
    </location>
</feature>
<feature type="region of interest" description="G1" evidence="2">
    <location>
        <begin position="160"/>
        <end position="167"/>
    </location>
</feature>
<feature type="region of interest" description="G2" evidence="2">
    <location>
        <begin position="186"/>
        <end position="190"/>
    </location>
</feature>
<feature type="region of interest" description="G3" evidence="2">
    <location>
        <begin position="207"/>
        <end position="210"/>
    </location>
</feature>
<feature type="region of interest" description="G4" evidence="2">
    <location>
        <begin position="279"/>
        <end position="282"/>
    </location>
</feature>
<feature type="region of interest" description="G5" evidence="2">
    <location>
        <begin position="309"/>
        <end position="311"/>
    </location>
</feature>
<feature type="compositionally biased region" description="Polar residues" evidence="3">
    <location>
        <begin position="39"/>
        <end position="50"/>
    </location>
</feature>
<feature type="compositionally biased region" description="Low complexity" evidence="3">
    <location>
        <begin position="51"/>
        <end position="62"/>
    </location>
</feature>
<feature type="binding site" evidence="1">
    <location>
        <begin position="160"/>
        <end position="167"/>
    </location>
    <ligand>
        <name>GTP</name>
        <dbReference type="ChEBI" id="CHEBI:37565"/>
    </ligand>
</feature>
<feature type="binding site" evidence="1">
    <location>
        <begin position="207"/>
        <end position="211"/>
    </location>
    <ligand>
        <name>GTP</name>
        <dbReference type="ChEBI" id="CHEBI:37565"/>
    </ligand>
</feature>
<feature type="binding site" evidence="1">
    <location>
        <begin position="279"/>
        <end position="282"/>
    </location>
    <ligand>
        <name>GTP</name>
        <dbReference type="ChEBI" id="CHEBI:37565"/>
    </ligand>
</feature>
<feature type="modified residue" description="Phosphoserine" evidence="5">
    <location>
        <position position="111"/>
    </location>
</feature>
<feature type="modified residue" description="Phosphoserine" evidence="5">
    <location>
        <position position="112"/>
    </location>
</feature>
<feature type="sequence conflict" description="In Ref. 4; CAA76979." evidence="4" ref="4">
    <original>P</original>
    <variation>A</variation>
    <location>
        <position position="40"/>
    </location>
</feature>
<feature type="sequence conflict" description="In Ref. 4; CAA76979." evidence="4" ref="4">
    <location>
        <begin position="252"/>
        <end position="255"/>
    </location>
</feature>
<proteinExistence type="evidence at protein level"/>
<gene>
    <name type="primary">ERG</name>
    <name type="ordered locus">At1g30960</name>
    <name type="ORF">F17F8.15</name>
</gene>